<protein>
    <recommendedName>
        <fullName>Uncharacterized protein MG256 homolog</fullName>
    </recommendedName>
</protein>
<sequence>MNYSYSFKEYIERFAKKVNSIDSEYFEFSSYIERMRTVFGLLIALICFSNVLCFLFIATWFSTKGFGQHYRALIFTLFIPFVTSLLANIIFINLNRAFREYFKISSKSRSFLVICAFSSLPIVNIWLMLWWVAMIKRFTSNYAFAIFDKYNGLTSGVFIFDFADNVNFEGKLVSFDNTKDTNRDFVHFYSEAKLKRDKITLQTNPIPHERMYVNRMYYQQKLSMGANQNSPSTAFANLKRYVEHKQQKIIKIKQFILT</sequence>
<keyword id="KW-1003">Cell membrane</keyword>
<keyword id="KW-0472">Membrane</keyword>
<keyword id="KW-1185">Reference proteome</keyword>
<keyword id="KW-0812">Transmembrane</keyword>
<keyword id="KW-1133">Transmembrane helix</keyword>
<feature type="chain" id="PRO_0000210493" description="Uncharacterized protein MG256 homolog">
    <location>
        <begin position="1"/>
        <end position="258"/>
    </location>
</feature>
<feature type="transmembrane region" description="Helical" evidence="1">
    <location>
        <begin position="38"/>
        <end position="58"/>
    </location>
</feature>
<feature type="transmembrane region" description="Helical" evidence="1">
    <location>
        <begin position="72"/>
        <end position="92"/>
    </location>
</feature>
<feature type="transmembrane region" description="Helical" evidence="1">
    <location>
        <begin position="111"/>
        <end position="131"/>
    </location>
</feature>
<comment type="subcellular location">
    <subcellularLocation>
        <location evidence="2">Cell membrane</location>
        <topology evidence="2">Multi-pass membrane protein</topology>
    </subcellularLocation>
</comment>
<dbReference type="EMBL" id="U00089">
    <property type="protein sequence ID" value="AAB96125.1"/>
    <property type="molecule type" value="Genomic_DNA"/>
</dbReference>
<dbReference type="PIR" id="S73803">
    <property type="entry name" value="S73803"/>
</dbReference>
<dbReference type="RefSeq" id="NP_110047.1">
    <property type="nucleotide sequence ID" value="NC_000912.1"/>
</dbReference>
<dbReference type="RefSeq" id="WP_010874715.1">
    <property type="nucleotide sequence ID" value="NC_000912.1"/>
</dbReference>
<dbReference type="STRING" id="272634.MPN_359"/>
<dbReference type="EnsemblBacteria" id="AAB96125">
    <property type="protein sequence ID" value="AAB96125"/>
    <property type="gene ID" value="MPN_359"/>
</dbReference>
<dbReference type="KEGG" id="mpn:MPN_359"/>
<dbReference type="PATRIC" id="fig|272634.6.peg.386"/>
<dbReference type="HOGENOM" id="CLU_1076985_0_0_14"/>
<dbReference type="OrthoDB" id="9963317at2"/>
<dbReference type="BioCyc" id="MPNE272634:G1GJ3-566-MONOMER"/>
<dbReference type="Proteomes" id="UP000000808">
    <property type="component" value="Chromosome"/>
</dbReference>
<dbReference type="GO" id="GO:0005886">
    <property type="term" value="C:plasma membrane"/>
    <property type="evidence" value="ECO:0007669"/>
    <property type="project" value="UniProtKB-SubCell"/>
</dbReference>
<proteinExistence type="predicted"/>
<accession>P75421</accession>
<evidence type="ECO:0000255" key="1"/>
<evidence type="ECO:0000305" key="2"/>
<gene>
    <name type="ordered locus">MPN_359</name>
    <name type="ORF">H91_orf258</name>
    <name type="ORF">MP477</name>
</gene>
<organism>
    <name type="scientific">Mycoplasma pneumoniae (strain ATCC 29342 / M129 / Subtype 1)</name>
    <name type="common">Mycoplasmoides pneumoniae</name>
    <dbReference type="NCBI Taxonomy" id="272634"/>
    <lineage>
        <taxon>Bacteria</taxon>
        <taxon>Bacillati</taxon>
        <taxon>Mycoplasmatota</taxon>
        <taxon>Mycoplasmoidales</taxon>
        <taxon>Mycoplasmoidaceae</taxon>
        <taxon>Mycoplasmoides</taxon>
    </lineage>
</organism>
<name>Y359_MYCPN</name>
<reference key="1">
    <citation type="journal article" date="1996" name="Nucleic Acids Res.">
        <title>Complete sequence analysis of the genome of the bacterium Mycoplasma pneumoniae.</title>
        <authorList>
            <person name="Himmelreich R."/>
            <person name="Hilbert H."/>
            <person name="Plagens H."/>
            <person name="Pirkl E."/>
            <person name="Li B.-C."/>
            <person name="Herrmann R."/>
        </authorList>
    </citation>
    <scope>NUCLEOTIDE SEQUENCE [LARGE SCALE GENOMIC DNA]</scope>
    <source>
        <strain>ATCC 29342 / M129 / Subtype 1</strain>
    </source>
</reference>